<keyword id="KW-0285">Flavoprotein</keyword>
<keyword id="KW-0288">FMN</keyword>
<keyword id="KW-0520">NAD</keyword>
<keyword id="KW-0560">Oxidoreductase</keyword>
<keyword id="KW-1185">Reference proteome</keyword>
<name>AZOR_NOCFA</name>
<reference key="1">
    <citation type="journal article" date="2004" name="Proc. Natl. Acad. Sci. U.S.A.">
        <title>The complete genomic sequence of Nocardia farcinica IFM 10152.</title>
        <authorList>
            <person name="Ishikawa J."/>
            <person name="Yamashita A."/>
            <person name="Mikami Y."/>
            <person name="Hoshino Y."/>
            <person name="Kurita H."/>
            <person name="Hotta K."/>
            <person name="Shiba T."/>
            <person name="Hattori M."/>
        </authorList>
    </citation>
    <scope>NUCLEOTIDE SEQUENCE [LARGE SCALE GENOMIC DNA]</scope>
    <source>
        <strain>IFM 10152</strain>
    </source>
</reference>
<comment type="function">
    <text evidence="1">Quinone reductase that provides resistance to thiol-specific stress caused by electrophilic quinones.</text>
</comment>
<comment type="function">
    <text evidence="1">Also exhibits azoreductase activity. Catalyzes the reductive cleavage of the azo bond in aromatic azo compounds to the corresponding amines.</text>
</comment>
<comment type="catalytic activity">
    <reaction evidence="1">
        <text>2 a quinone + NADH + H(+) = 2 a 1,4-benzosemiquinone + NAD(+)</text>
        <dbReference type="Rhea" id="RHEA:65952"/>
        <dbReference type="ChEBI" id="CHEBI:15378"/>
        <dbReference type="ChEBI" id="CHEBI:57540"/>
        <dbReference type="ChEBI" id="CHEBI:57945"/>
        <dbReference type="ChEBI" id="CHEBI:132124"/>
        <dbReference type="ChEBI" id="CHEBI:134225"/>
    </reaction>
</comment>
<comment type="catalytic activity">
    <reaction evidence="1">
        <text>N,N-dimethyl-1,4-phenylenediamine + anthranilate + 2 NAD(+) = 2-(4-dimethylaminophenyl)diazenylbenzoate + 2 NADH + 2 H(+)</text>
        <dbReference type="Rhea" id="RHEA:55872"/>
        <dbReference type="ChEBI" id="CHEBI:15378"/>
        <dbReference type="ChEBI" id="CHEBI:15783"/>
        <dbReference type="ChEBI" id="CHEBI:16567"/>
        <dbReference type="ChEBI" id="CHEBI:57540"/>
        <dbReference type="ChEBI" id="CHEBI:57945"/>
        <dbReference type="ChEBI" id="CHEBI:71579"/>
        <dbReference type="EC" id="1.7.1.17"/>
    </reaction>
</comment>
<comment type="cofactor">
    <cofactor evidence="1">
        <name>FMN</name>
        <dbReference type="ChEBI" id="CHEBI:58210"/>
    </cofactor>
    <text evidence="1">Binds 1 FMN per subunit.</text>
</comment>
<comment type="subunit">
    <text evidence="1">Homodimer.</text>
</comment>
<comment type="similarity">
    <text evidence="1">Belongs to the azoreductase type 1 family.</text>
</comment>
<protein>
    <recommendedName>
        <fullName evidence="1">FMN-dependent NADH:quinone oxidoreductase</fullName>
        <ecNumber evidence="1">1.6.5.-</ecNumber>
    </recommendedName>
    <alternativeName>
        <fullName evidence="1">Azo-dye reductase</fullName>
    </alternativeName>
    <alternativeName>
        <fullName evidence="1">FMN-dependent NADH-azo compound oxidoreductase</fullName>
    </alternativeName>
    <alternativeName>
        <fullName evidence="1">FMN-dependent NADH-azoreductase</fullName>
        <ecNumber evidence="1">1.7.1.17</ecNumber>
    </alternativeName>
</protein>
<proteinExistence type="inferred from homology"/>
<sequence length="216" mass="23541">MPTLLHLDASPRRRSISRDIGAAFADSWRATAPNGHYIHRDLAADPVPFIDAAWTEICDAVLAAGGTDLAALPTLVRTPAQAAAWRIVEPLLDELLAADVVLIGTPMYNYSIPAALKAWLDQVTFPRMSLAPRRFVVAAARGGSYSPGTPKAAFDHQERYLRDFFAGHFAVTDTVFVTAELANARQDPALAARRAEHDASYADALDTARRLGKEYR</sequence>
<feature type="chain" id="PRO_0000245940" description="FMN-dependent NADH:quinone oxidoreductase">
    <location>
        <begin position="1"/>
        <end position="216"/>
    </location>
</feature>
<feature type="binding site" evidence="1">
    <location>
        <position position="10"/>
    </location>
    <ligand>
        <name>FMN</name>
        <dbReference type="ChEBI" id="CHEBI:58210"/>
    </ligand>
</feature>
<feature type="binding site" evidence="1">
    <location>
        <begin position="15"/>
        <end position="17"/>
    </location>
    <ligand>
        <name>FMN</name>
        <dbReference type="ChEBI" id="CHEBI:58210"/>
    </ligand>
</feature>
<evidence type="ECO:0000255" key="1">
    <source>
        <dbReference type="HAMAP-Rule" id="MF_01216"/>
    </source>
</evidence>
<organism>
    <name type="scientific">Nocardia farcinica (strain IFM 10152)</name>
    <dbReference type="NCBI Taxonomy" id="247156"/>
    <lineage>
        <taxon>Bacteria</taxon>
        <taxon>Bacillati</taxon>
        <taxon>Actinomycetota</taxon>
        <taxon>Actinomycetes</taxon>
        <taxon>Mycobacteriales</taxon>
        <taxon>Nocardiaceae</taxon>
        <taxon>Nocardia</taxon>
    </lineage>
</organism>
<accession>Q5YR63</accession>
<dbReference type="EC" id="1.6.5.-" evidence="1"/>
<dbReference type="EC" id="1.7.1.17" evidence="1"/>
<dbReference type="EMBL" id="AP006618">
    <property type="protein sequence ID" value="BAD59328.1"/>
    <property type="molecule type" value="Genomic_DNA"/>
</dbReference>
<dbReference type="RefSeq" id="WP_011211012.1">
    <property type="nucleotide sequence ID" value="NC_006361.1"/>
</dbReference>
<dbReference type="SMR" id="Q5YR63"/>
<dbReference type="STRING" id="247156.NFA_44770"/>
<dbReference type="GeneID" id="61135084"/>
<dbReference type="KEGG" id="nfa:NFA_44770"/>
<dbReference type="eggNOG" id="COG1182">
    <property type="taxonomic scope" value="Bacteria"/>
</dbReference>
<dbReference type="HOGENOM" id="CLU_088964_0_1_11"/>
<dbReference type="OrthoDB" id="9805013at2"/>
<dbReference type="Proteomes" id="UP000006820">
    <property type="component" value="Chromosome"/>
</dbReference>
<dbReference type="GO" id="GO:0009055">
    <property type="term" value="F:electron transfer activity"/>
    <property type="evidence" value="ECO:0007669"/>
    <property type="project" value="UniProtKB-UniRule"/>
</dbReference>
<dbReference type="GO" id="GO:0010181">
    <property type="term" value="F:FMN binding"/>
    <property type="evidence" value="ECO:0007669"/>
    <property type="project" value="UniProtKB-UniRule"/>
</dbReference>
<dbReference type="GO" id="GO:0016652">
    <property type="term" value="F:oxidoreductase activity, acting on NAD(P)H as acceptor"/>
    <property type="evidence" value="ECO:0007669"/>
    <property type="project" value="UniProtKB-UniRule"/>
</dbReference>
<dbReference type="GO" id="GO:0016655">
    <property type="term" value="F:oxidoreductase activity, acting on NAD(P)H, quinone or similar compound as acceptor"/>
    <property type="evidence" value="ECO:0007669"/>
    <property type="project" value="InterPro"/>
</dbReference>
<dbReference type="Gene3D" id="3.40.50.360">
    <property type="match status" value="1"/>
</dbReference>
<dbReference type="HAMAP" id="MF_01216">
    <property type="entry name" value="Azoreductase_type1"/>
    <property type="match status" value="1"/>
</dbReference>
<dbReference type="InterPro" id="IPR003680">
    <property type="entry name" value="Flavodoxin_fold"/>
</dbReference>
<dbReference type="InterPro" id="IPR029039">
    <property type="entry name" value="Flavoprotein-like_sf"/>
</dbReference>
<dbReference type="InterPro" id="IPR050104">
    <property type="entry name" value="FMN-dep_NADH:Q_OxRdtase_AzoR1"/>
</dbReference>
<dbReference type="InterPro" id="IPR023048">
    <property type="entry name" value="NADH:quinone_OxRdtase_FMN_depd"/>
</dbReference>
<dbReference type="PANTHER" id="PTHR43741">
    <property type="entry name" value="FMN-DEPENDENT NADH-AZOREDUCTASE 1"/>
    <property type="match status" value="1"/>
</dbReference>
<dbReference type="PANTHER" id="PTHR43741:SF4">
    <property type="entry name" value="FMN-DEPENDENT NADH:QUINONE OXIDOREDUCTASE"/>
    <property type="match status" value="1"/>
</dbReference>
<dbReference type="Pfam" id="PF02525">
    <property type="entry name" value="Flavodoxin_2"/>
    <property type="match status" value="1"/>
</dbReference>
<dbReference type="SUPFAM" id="SSF52218">
    <property type="entry name" value="Flavoproteins"/>
    <property type="match status" value="1"/>
</dbReference>
<gene>
    <name evidence="1" type="primary">azoR</name>
    <name type="ordered locus">NFA_44770</name>
</gene>